<protein>
    <recommendedName>
        <fullName>Thioredoxin 1</fullName>
        <shortName>Trx-1</shortName>
    </recommendedName>
</protein>
<evidence type="ECO:0000250" key="1"/>
<evidence type="ECO:0000255" key="2">
    <source>
        <dbReference type="PROSITE-ProRule" id="PRU00691"/>
    </source>
</evidence>
<evidence type="ECO:0000269" key="3">
    <source>
    </source>
</evidence>
<evidence type="ECO:0000269" key="4">
    <source>
    </source>
</evidence>
<evidence type="ECO:0000305" key="5"/>
<evidence type="ECO:0007829" key="6">
    <source>
        <dbReference type="PDB" id="1T00"/>
    </source>
</evidence>
<organism>
    <name type="scientific">Streptomyces coelicolor (strain ATCC BAA-471 / A3(2) / M145)</name>
    <dbReference type="NCBI Taxonomy" id="100226"/>
    <lineage>
        <taxon>Bacteria</taxon>
        <taxon>Bacillati</taxon>
        <taxon>Actinomycetota</taxon>
        <taxon>Actinomycetes</taxon>
        <taxon>Kitasatosporales</taxon>
        <taxon>Streptomycetaceae</taxon>
        <taxon>Streptomyces</taxon>
        <taxon>Streptomyces albidoflavus group</taxon>
    </lineage>
</organism>
<reference key="1">
    <citation type="journal article" date="1998" name="Gene">
        <title>Gene organization in the trxA/B-oriC region of the Streptomyces coelicolor chromosome and comparison with other eubacteria.</title>
        <authorList>
            <person name="Gal-Mor O."/>
            <person name="Borovok I."/>
            <person name="Av-Gay Y."/>
            <person name="Cohen G."/>
            <person name="Aharonowitz Y."/>
        </authorList>
    </citation>
    <scope>NUCLEOTIDE SEQUENCE [GENOMIC DNA]</scope>
    <source>
        <strain>ATCC BAA-471 / A3(2) / M145</strain>
    </source>
</reference>
<reference key="2">
    <citation type="journal article" date="2000" name="J. Bacteriol.">
        <title>Partitioning of the linear chromosome during sporulation of Streptomyces coelicolor A3(2) involves an oriC-linked parAB locus.</title>
        <authorList>
            <person name="Kim H.-J."/>
            <person name="Calcutt M.J."/>
            <person name="Schmidt F.J."/>
            <person name="Chater K.F."/>
        </authorList>
    </citation>
    <scope>NUCLEOTIDE SEQUENCE [GENOMIC DNA]</scope>
    <source>
        <strain>A3(2) / NRRL B-16638</strain>
    </source>
</reference>
<reference key="3">
    <citation type="journal article" date="2002" name="Nature">
        <title>Complete genome sequence of the model actinomycete Streptomyces coelicolor A3(2).</title>
        <authorList>
            <person name="Bentley S.D."/>
            <person name="Chater K.F."/>
            <person name="Cerdeno-Tarraga A.-M."/>
            <person name="Challis G.L."/>
            <person name="Thomson N.R."/>
            <person name="James K.D."/>
            <person name="Harris D.E."/>
            <person name="Quail M.A."/>
            <person name="Kieser H."/>
            <person name="Harper D."/>
            <person name="Bateman A."/>
            <person name="Brown S."/>
            <person name="Chandra G."/>
            <person name="Chen C.W."/>
            <person name="Collins M."/>
            <person name="Cronin A."/>
            <person name="Fraser A."/>
            <person name="Goble A."/>
            <person name="Hidalgo J."/>
            <person name="Hornsby T."/>
            <person name="Howarth S."/>
            <person name="Huang C.-H."/>
            <person name="Kieser T."/>
            <person name="Larke L."/>
            <person name="Murphy L.D."/>
            <person name="Oliver K."/>
            <person name="O'Neil S."/>
            <person name="Rabbinowitsch E."/>
            <person name="Rajandream M.A."/>
            <person name="Rutherford K.M."/>
            <person name="Rutter S."/>
            <person name="Seeger K."/>
            <person name="Saunders D."/>
            <person name="Sharp S."/>
            <person name="Squares R."/>
            <person name="Squares S."/>
            <person name="Taylor K."/>
            <person name="Warren T."/>
            <person name="Wietzorrek A."/>
            <person name="Woodward J.R."/>
            <person name="Barrell B.G."/>
            <person name="Parkhill J."/>
            <person name="Hopwood D.A."/>
        </authorList>
    </citation>
    <scope>NUCLEOTIDE SEQUENCE [LARGE SCALE GENOMIC DNA]</scope>
    <source>
        <strain>ATCC BAA-471 / A3(2) / M145</strain>
    </source>
</reference>
<reference key="4">
    <citation type="journal article" date="1998" name="EMBO J.">
        <title>sigmaR, an RNA polymerase sigma factor that modulates expression of the thioredoxin system in response to oxidative stress in Streptomyces coelicolor A3(2).</title>
        <authorList>
            <person name="Paget M.S."/>
            <person name="Kang J.G."/>
            <person name="Roe J.H."/>
            <person name="Buttner M.J."/>
        </authorList>
    </citation>
    <scope>INDUCTION</scope>
    <source>
        <strain>ATCC BAA-471 / A3(2) / M145</strain>
    </source>
</reference>
<reference key="5">
    <citation type="journal article" date="1999" name="EMBO J.">
        <title>RsrA, an anti-sigma factor regulated by redox change.</title>
        <authorList>
            <person name="Kang J.G."/>
            <person name="Paget M.S.B."/>
            <person name="Seok Y.J."/>
            <person name="Hahn M.Y."/>
            <person name="Bae J.B."/>
            <person name="Hahn J.S."/>
        </authorList>
    </citation>
    <scope>FUNCTION WITH RSRA AS SUBSTRATE</scope>
    <source>
        <strain>ATCC BAA-471 / A3(2) / M145</strain>
    </source>
</reference>
<reference key="6">
    <citation type="journal article" date="2005" name="Acta Crystallogr. F">
        <title>Expression, purification and X-ray crystallographic analysis of thioredoxin from Streptomyces coelicolor.</title>
        <authorList>
            <person name="Stefankova P."/>
            <person name="Maderova J."/>
            <person name="Barak I."/>
            <person name="Kollarova M."/>
            <person name="Otwinowski Z."/>
        </authorList>
    </citation>
    <scope>X-RAY CRYSTALLOGRAPHY (1.51 ANGSTROMS)</scope>
</reference>
<accession>P52230</accession>
<sequence>MAGTLKHVTDDSFEQDVLKNDKPVLVDFWAAWCGPCRQIAPSLEAIAAEYGDKIEIVKLNIDENPGTAAKYGVMSIPTLNVYQGGEVAKTIVGAKPKAAIVRDLEDFIAD</sequence>
<name>THIO1_STRCO</name>
<feature type="chain" id="PRO_0000120136" description="Thioredoxin 1">
    <location>
        <begin position="1"/>
        <end position="110"/>
    </location>
</feature>
<feature type="domain" description="Thioredoxin" evidence="2">
    <location>
        <begin position="2"/>
        <end position="109"/>
    </location>
</feature>
<feature type="disulfide bond" description="Redox-active" evidence="2">
    <location>
        <begin position="33"/>
        <end position="36"/>
    </location>
</feature>
<feature type="sequence conflict" description="In Ref. 1; CAA63074/CAA07452." evidence="5" ref="1">
    <original>KP</original>
    <variation>NA</variation>
    <location>
        <begin position="95"/>
        <end position="96"/>
    </location>
</feature>
<feature type="strand" evidence="6">
    <location>
        <begin position="6"/>
        <end position="8"/>
    </location>
</feature>
<feature type="turn" evidence="6">
    <location>
        <begin position="10"/>
        <end position="12"/>
    </location>
</feature>
<feature type="helix" evidence="6">
    <location>
        <begin position="13"/>
        <end position="16"/>
    </location>
</feature>
<feature type="turn" evidence="6">
    <location>
        <begin position="17"/>
        <end position="19"/>
    </location>
</feature>
<feature type="strand" evidence="6">
    <location>
        <begin position="24"/>
        <end position="29"/>
    </location>
</feature>
<feature type="helix" evidence="6">
    <location>
        <begin position="34"/>
        <end position="49"/>
    </location>
</feature>
<feature type="turn" evidence="6">
    <location>
        <begin position="50"/>
        <end position="53"/>
    </location>
</feature>
<feature type="strand" evidence="6">
    <location>
        <begin position="55"/>
        <end position="60"/>
    </location>
</feature>
<feature type="turn" evidence="6">
    <location>
        <begin position="61"/>
        <end position="63"/>
    </location>
</feature>
<feature type="helix" evidence="6">
    <location>
        <begin position="65"/>
        <end position="70"/>
    </location>
</feature>
<feature type="strand" evidence="6">
    <location>
        <begin position="75"/>
        <end position="83"/>
    </location>
</feature>
<feature type="strand" evidence="6">
    <location>
        <begin position="86"/>
        <end position="93"/>
    </location>
</feature>
<feature type="helix" evidence="6">
    <location>
        <begin position="97"/>
        <end position="103"/>
    </location>
</feature>
<feature type="helix" evidence="6">
    <location>
        <begin position="105"/>
        <end position="108"/>
    </location>
</feature>
<gene>
    <name type="primary">trxA</name>
    <name type="ordered locus">SCO3889</name>
    <name type="ORF">SCH24.11c</name>
</gene>
<comment type="function">
    <text evidence="3">Component of the thioredoxin-thioredoxin reductase system. Participates in various redox reactions through the reversible oxidation of its active center dithiol to a disulfide and catalyzes dithiol-disulfide exchange reactions. Stimulates complex formation between sigma factor SigR and its cognate anti-sigma factor RsrA probably by reducing RsrA.</text>
</comment>
<comment type="subcellular location">
    <subcellularLocation>
        <location evidence="1">Cytoplasm</location>
    </subcellularLocation>
</comment>
<comment type="induction">
    <text evidence="4">Expressed from 2 promoters, 1 of which (trxBp1) is under control of SigR, and further transiently induced (about 50-fold) by the thiol-oxidizing agent diamide. Part of the trxB-trxA operon.</text>
</comment>
<comment type="similarity">
    <text evidence="5">Belongs to the thioredoxin family.</text>
</comment>
<keyword id="KW-0002">3D-structure</keyword>
<keyword id="KW-0963">Cytoplasm</keyword>
<keyword id="KW-1015">Disulfide bond</keyword>
<keyword id="KW-0249">Electron transport</keyword>
<keyword id="KW-0676">Redox-active center</keyword>
<keyword id="KW-1185">Reference proteome</keyword>
<keyword id="KW-0813">Transport</keyword>
<proteinExistence type="evidence at protein level"/>
<dbReference type="EMBL" id="X92105">
    <property type="protein sequence ID" value="CAA63077.1"/>
    <property type="molecule type" value="Genomic_DNA"/>
</dbReference>
<dbReference type="EMBL" id="X92103">
    <property type="protein sequence ID" value="CAA63074.1"/>
    <property type="molecule type" value="Genomic_DNA"/>
</dbReference>
<dbReference type="EMBL" id="AJ007313">
    <property type="protein sequence ID" value="CAA07452.1"/>
    <property type="molecule type" value="Genomic_DNA"/>
</dbReference>
<dbReference type="EMBL" id="AF031590">
    <property type="protein sequence ID" value="AAC03481.1"/>
    <property type="molecule type" value="Genomic_DNA"/>
</dbReference>
<dbReference type="EMBL" id="AF187159">
    <property type="protein sequence ID" value="AAF16002.1"/>
    <property type="molecule type" value="Genomic_DNA"/>
</dbReference>
<dbReference type="EMBL" id="AL939118">
    <property type="protein sequence ID" value="CAB42711.1"/>
    <property type="molecule type" value="Genomic_DNA"/>
</dbReference>
<dbReference type="PIR" id="T36576">
    <property type="entry name" value="T36576"/>
</dbReference>
<dbReference type="PIR" id="T42061">
    <property type="entry name" value="T42061"/>
</dbReference>
<dbReference type="RefSeq" id="NP_628075.1">
    <property type="nucleotide sequence ID" value="NC_003888.3"/>
</dbReference>
<dbReference type="RefSeq" id="WP_003975042.1">
    <property type="nucleotide sequence ID" value="NZ_VNID01000003.1"/>
</dbReference>
<dbReference type="PDB" id="1T00">
    <property type="method" value="X-ray"/>
    <property type="resolution" value="1.51 A"/>
    <property type="chains" value="A=1-110"/>
</dbReference>
<dbReference type="PDBsum" id="1T00"/>
<dbReference type="SMR" id="P52230"/>
<dbReference type="FunCoup" id="P52230">
    <property type="interactions" value="396"/>
</dbReference>
<dbReference type="STRING" id="100226.gene:17761516"/>
<dbReference type="PaxDb" id="100226-SCO3889"/>
<dbReference type="GeneID" id="96656681"/>
<dbReference type="KEGG" id="sco:SCO3889"/>
<dbReference type="PATRIC" id="fig|100226.15.peg.3962"/>
<dbReference type="eggNOG" id="COG3118">
    <property type="taxonomic scope" value="Bacteria"/>
</dbReference>
<dbReference type="HOGENOM" id="CLU_090389_10_2_11"/>
<dbReference type="InParanoid" id="P52230"/>
<dbReference type="OrthoDB" id="9790390at2"/>
<dbReference type="PhylomeDB" id="P52230"/>
<dbReference type="EvolutionaryTrace" id="P52230"/>
<dbReference type="Proteomes" id="UP000001973">
    <property type="component" value="Chromosome"/>
</dbReference>
<dbReference type="GO" id="GO:0005737">
    <property type="term" value="C:cytoplasm"/>
    <property type="evidence" value="ECO:0000318"/>
    <property type="project" value="GO_Central"/>
</dbReference>
<dbReference type="GO" id="GO:0005829">
    <property type="term" value="C:cytosol"/>
    <property type="evidence" value="ECO:0000318"/>
    <property type="project" value="GO_Central"/>
</dbReference>
<dbReference type="GO" id="GO:0015035">
    <property type="term" value="F:protein-disulfide reductase activity"/>
    <property type="evidence" value="ECO:0000318"/>
    <property type="project" value="GO_Central"/>
</dbReference>
<dbReference type="GO" id="GO:0045454">
    <property type="term" value="P:cell redox homeostasis"/>
    <property type="evidence" value="ECO:0000318"/>
    <property type="project" value="GO_Central"/>
</dbReference>
<dbReference type="CDD" id="cd02947">
    <property type="entry name" value="TRX_family"/>
    <property type="match status" value="1"/>
</dbReference>
<dbReference type="FunFam" id="3.40.30.10:FF:000001">
    <property type="entry name" value="Thioredoxin"/>
    <property type="match status" value="1"/>
</dbReference>
<dbReference type="Gene3D" id="3.40.30.10">
    <property type="entry name" value="Glutaredoxin"/>
    <property type="match status" value="1"/>
</dbReference>
<dbReference type="InterPro" id="IPR005746">
    <property type="entry name" value="Thioredoxin"/>
</dbReference>
<dbReference type="InterPro" id="IPR036249">
    <property type="entry name" value="Thioredoxin-like_sf"/>
</dbReference>
<dbReference type="InterPro" id="IPR017937">
    <property type="entry name" value="Thioredoxin_CS"/>
</dbReference>
<dbReference type="InterPro" id="IPR013766">
    <property type="entry name" value="Thioredoxin_domain"/>
</dbReference>
<dbReference type="NCBIfam" id="TIGR01068">
    <property type="entry name" value="thioredoxin"/>
    <property type="match status" value="1"/>
</dbReference>
<dbReference type="PANTHER" id="PTHR45663">
    <property type="entry name" value="GEO12009P1"/>
    <property type="match status" value="1"/>
</dbReference>
<dbReference type="PANTHER" id="PTHR45663:SF11">
    <property type="entry name" value="GEO12009P1"/>
    <property type="match status" value="1"/>
</dbReference>
<dbReference type="Pfam" id="PF00085">
    <property type="entry name" value="Thioredoxin"/>
    <property type="match status" value="1"/>
</dbReference>
<dbReference type="PIRSF" id="PIRSF000077">
    <property type="entry name" value="Thioredoxin"/>
    <property type="match status" value="1"/>
</dbReference>
<dbReference type="PRINTS" id="PR00421">
    <property type="entry name" value="THIOREDOXIN"/>
</dbReference>
<dbReference type="SUPFAM" id="SSF52833">
    <property type="entry name" value="Thioredoxin-like"/>
    <property type="match status" value="1"/>
</dbReference>
<dbReference type="PROSITE" id="PS00194">
    <property type="entry name" value="THIOREDOXIN_1"/>
    <property type="match status" value="1"/>
</dbReference>
<dbReference type="PROSITE" id="PS51352">
    <property type="entry name" value="THIOREDOXIN_2"/>
    <property type="match status" value="1"/>
</dbReference>